<organism>
    <name type="scientific">Alkaliphilus oremlandii (strain OhILAs)</name>
    <name type="common">Clostridium oremlandii (strain OhILAs)</name>
    <dbReference type="NCBI Taxonomy" id="350688"/>
    <lineage>
        <taxon>Bacteria</taxon>
        <taxon>Bacillati</taxon>
        <taxon>Bacillota</taxon>
        <taxon>Clostridia</taxon>
        <taxon>Peptostreptococcales</taxon>
        <taxon>Natronincolaceae</taxon>
        <taxon>Alkaliphilus</taxon>
    </lineage>
</organism>
<gene>
    <name evidence="1" type="primary">der</name>
    <name type="synonym">engA</name>
    <name type="ordered locus">Clos_1399</name>
</gene>
<accession>A8MH56</accession>
<proteinExistence type="inferred from homology"/>
<name>DER_ALKOO</name>
<comment type="function">
    <text evidence="1">GTPase that plays an essential role in the late steps of ribosome biogenesis.</text>
</comment>
<comment type="subunit">
    <text evidence="1">Associates with the 50S ribosomal subunit.</text>
</comment>
<comment type="similarity">
    <text evidence="1">Belongs to the TRAFAC class TrmE-Era-EngA-EngB-Septin-like GTPase superfamily. EngA (Der) GTPase family.</text>
</comment>
<evidence type="ECO:0000255" key="1">
    <source>
        <dbReference type="HAMAP-Rule" id="MF_00195"/>
    </source>
</evidence>
<reference key="1">
    <citation type="submission" date="2007-10" db="EMBL/GenBank/DDBJ databases">
        <title>Complete genome of Alkaliphilus oremlandii OhILAs.</title>
        <authorList>
            <person name="Copeland A."/>
            <person name="Lucas S."/>
            <person name="Lapidus A."/>
            <person name="Barry K."/>
            <person name="Detter J.C."/>
            <person name="Glavina del Rio T."/>
            <person name="Hammon N."/>
            <person name="Israni S."/>
            <person name="Dalin E."/>
            <person name="Tice H."/>
            <person name="Pitluck S."/>
            <person name="Chain P."/>
            <person name="Malfatti S."/>
            <person name="Shin M."/>
            <person name="Vergez L."/>
            <person name="Schmutz J."/>
            <person name="Larimer F."/>
            <person name="Land M."/>
            <person name="Hauser L."/>
            <person name="Kyrpides N."/>
            <person name="Mikhailova N."/>
            <person name="Stolz J.F."/>
            <person name="Dawson A."/>
            <person name="Fisher E."/>
            <person name="Crable B."/>
            <person name="Perera E."/>
            <person name="Lisak J."/>
            <person name="Ranganathan M."/>
            <person name="Basu P."/>
            <person name="Richardson P."/>
        </authorList>
    </citation>
    <scope>NUCLEOTIDE SEQUENCE [LARGE SCALE GENOMIC DNA]</scope>
    <source>
        <strain>OhILAs</strain>
    </source>
</reference>
<protein>
    <recommendedName>
        <fullName evidence="1">GTPase Der</fullName>
    </recommendedName>
    <alternativeName>
        <fullName evidence="1">GTP-binding protein EngA</fullName>
    </alternativeName>
</protein>
<sequence>MARPIVAVVGRPNVGKSTLFNKIAGERISIVENKPGVTRDRIYAEAEWLNYQFTLIDTGGIEPESEEIIPAQMRRQAELAMETANVIIFVVDGREGLTSVDRDVAELLRKTKKPVIVTLNKVDTRHQSEHFYEFYELGMGDPIEISASLGLGIGDLLDEVVKNFNPEDYNQYDDDVIKVAMIGKPNVGKSSLINRILGEERVIVSDIAGTTRDAIDTPFTDGDDRYVLIDTAGIRRKSRITESIEKYSIVRAIAAVEKSDVCLLVIDASEGVTEQDKKIAGYSHENGKGMVIVVNKWDIIEKDNHTMNEFIKEIRNELTYISYAPIVFVSALTGQRMNKILEEVKHVSNQNAMRIPTGALNEVIGEAILLNQAPSDKGKRLKVFYATQASVKPPTFILFINDKELMHFSYLRYLENKIRENFGFEGTPIRFILREKTGRD</sequence>
<feature type="chain" id="PRO_1000058520" description="GTPase Der">
    <location>
        <begin position="1"/>
        <end position="440"/>
    </location>
</feature>
<feature type="domain" description="EngA-type G 1">
    <location>
        <begin position="4"/>
        <end position="168"/>
    </location>
</feature>
<feature type="domain" description="EngA-type G 2">
    <location>
        <begin position="177"/>
        <end position="352"/>
    </location>
</feature>
<feature type="domain" description="KH-like" evidence="1">
    <location>
        <begin position="353"/>
        <end position="437"/>
    </location>
</feature>
<feature type="binding site" evidence="1">
    <location>
        <begin position="10"/>
        <end position="17"/>
    </location>
    <ligand>
        <name>GTP</name>
        <dbReference type="ChEBI" id="CHEBI:37565"/>
        <label>1</label>
    </ligand>
</feature>
<feature type="binding site" evidence="1">
    <location>
        <begin position="57"/>
        <end position="61"/>
    </location>
    <ligand>
        <name>GTP</name>
        <dbReference type="ChEBI" id="CHEBI:37565"/>
        <label>1</label>
    </ligand>
</feature>
<feature type="binding site" evidence="1">
    <location>
        <begin position="120"/>
        <end position="123"/>
    </location>
    <ligand>
        <name>GTP</name>
        <dbReference type="ChEBI" id="CHEBI:37565"/>
        <label>1</label>
    </ligand>
</feature>
<feature type="binding site" evidence="1">
    <location>
        <begin position="183"/>
        <end position="190"/>
    </location>
    <ligand>
        <name>GTP</name>
        <dbReference type="ChEBI" id="CHEBI:37565"/>
        <label>2</label>
    </ligand>
</feature>
<feature type="binding site" evidence="1">
    <location>
        <begin position="230"/>
        <end position="234"/>
    </location>
    <ligand>
        <name>GTP</name>
        <dbReference type="ChEBI" id="CHEBI:37565"/>
        <label>2</label>
    </ligand>
</feature>
<feature type="binding site" evidence="1">
    <location>
        <begin position="295"/>
        <end position="298"/>
    </location>
    <ligand>
        <name>GTP</name>
        <dbReference type="ChEBI" id="CHEBI:37565"/>
        <label>2</label>
    </ligand>
</feature>
<dbReference type="EMBL" id="CP000853">
    <property type="protein sequence ID" value="ABW18943.1"/>
    <property type="molecule type" value="Genomic_DNA"/>
</dbReference>
<dbReference type="RefSeq" id="WP_012159255.1">
    <property type="nucleotide sequence ID" value="NC_009922.1"/>
</dbReference>
<dbReference type="SMR" id="A8MH56"/>
<dbReference type="STRING" id="350688.Clos_1399"/>
<dbReference type="KEGG" id="aoe:Clos_1399"/>
<dbReference type="eggNOG" id="COG1160">
    <property type="taxonomic scope" value="Bacteria"/>
</dbReference>
<dbReference type="HOGENOM" id="CLU_016077_6_2_9"/>
<dbReference type="OrthoDB" id="9805918at2"/>
<dbReference type="Proteomes" id="UP000000269">
    <property type="component" value="Chromosome"/>
</dbReference>
<dbReference type="GO" id="GO:0005525">
    <property type="term" value="F:GTP binding"/>
    <property type="evidence" value="ECO:0007669"/>
    <property type="project" value="UniProtKB-UniRule"/>
</dbReference>
<dbReference type="GO" id="GO:0043022">
    <property type="term" value="F:ribosome binding"/>
    <property type="evidence" value="ECO:0007669"/>
    <property type="project" value="TreeGrafter"/>
</dbReference>
<dbReference type="GO" id="GO:0042254">
    <property type="term" value="P:ribosome biogenesis"/>
    <property type="evidence" value="ECO:0007669"/>
    <property type="project" value="UniProtKB-KW"/>
</dbReference>
<dbReference type="CDD" id="cd01894">
    <property type="entry name" value="EngA1"/>
    <property type="match status" value="1"/>
</dbReference>
<dbReference type="CDD" id="cd01895">
    <property type="entry name" value="EngA2"/>
    <property type="match status" value="1"/>
</dbReference>
<dbReference type="FunFam" id="3.30.300.20:FF:000004">
    <property type="entry name" value="GTPase Der"/>
    <property type="match status" value="1"/>
</dbReference>
<dbReference type="FunFam" id="3.40.50.300:FF:000040">
    <property type="entry name" value="GTPase Der"/>
    <property type="match status" value="1"/>
</dbReference>
<dbReference type="FunFam" id="3.40.50.300:FF:000057">
    <property type="entry name" value="GTPase Der"/>
    <property type="match status" value="1"/>
</dbReference>
<dbReference type="Gene3D" id="3.30.300.20">
    <property type="match status" value="1"/>
</dbReference>
<dbReference type="Gene3D" id="3.40.50.300">
    <property type="entry name" value="P-loop containing nucleotide triphosphate hydrolases"/>
    <property type="match status" value="2"/>
</dbReference>
<dbReference type="HAMAP" id="MF_00195">
    <property type="entry name" value="GTPase_Der"/>
    <property type="match status" value="1"/>
</dbReference>
<dbReference type="InterPro" id="IPR031166">
    <property type="entry name" value="G_ENGA"/>
</dbReference>
<dbReference type="InterPro" id="IPR006073">
    <property type="entry name" value="GTP-bd"/>
</dbReference>
<dbReference type="InterPro" id="IPR016484">
    <property type="entry name" value="GTPase_Der"/>
</dbReference>
<dbReference type="InterPro" id="IPR032859">
    <property type="entry name" value="KH_dom-like"/>
</dbReference>
<dbReference type="InterPro" id="IPR015946">
    <property type="entry name" value="KH_dom-like_a/b"/>
</dbReference>
<dbReference type="InterPro" id="IPR027417">
    <property type="entry name" value="P-loop_NTPase"/>
</dbReference>
<dbReference type="InterPro" id="IPR005225">
    <property type="entry name" value="Small_GTP-bd"/>
</dbReference>
<dbReference type="NCBIfam" id="TIGR03594">
    <property type="entry name" value="GTPase_EngA"/>
    <property type="match status" value="1"/>
</dbReference>
<dbReference type="NCBIfam" id="TIGR00231">
    <property type="entry name" value="small_GTP"/>
    <property type="match status" value="2"/>
</dbReference>
<dbReference type="PANTHER" id="PTHR43834">
    <property type="entry name" value="GTPASE DER"/>
    <property type="match status" value="1"/>
</dbReference>
<dbReference type="PANTHER" id="PTHR43834:SF6">
    <property type="entry name" value="GTPASE DER"/>
    <property type="match status" value="1"/>
</dbReference>
<dbReference type="Pfam" id="PF14714">
    <property type="entry name" value="KH_dom-like"/>
    <property type="match status" value="1"/>
</dbReference>
<dbReference type="Pfam" id="PF01926">
    <property type="entry name" value="MMR_HSR1"/>
    <property type="match status" value="2"/>
</dbReference>
<dbReference type="PIRSF" id="PIRSF006485">
    <property type="entry name" value="GTP-binding_EngA"/>
    <property type="match status" value="1"/>
</dbReference>
<dbReference type="PRINTS" id="PR00326">
    <property type="entry name" value="GTP1OBG"/>
</dbReference>
<dbReference type="SUPFAM" id="SSF52540">
    <property type="entry name" value="P-loop containing nucleoside triphosphate hydrolases"/>
    <property type="match status" value="2"/>
</dbReference>
<dbReference type="PROSITE" id="PS51712">
    <property type="entry name" value="G_ENGA"/>
    <property type="match status" value="2"/>
</dbReference>
<keyword id="KW-0342">GTP-binding</keyword>
<keyword id="KW-0547">Nucleotide-binding</keyword>
<keyword id="KW-1185">Reference proteome</keyword>
<keyword id="KW-0677">Repeat</keyword>
<keyword id="KW-0690">Ribosome biogenesis</keyword>